<dbReference type="EC" id="3.4.21.80"/>
<dbReference type="EMBL" id="M17103">
    <property type="protein sequence ID" value="AAA26818.1"/>
    <property type="molecule type" value="Genomic_DNA"/>
</dbReference>
<dbReference type="PIR" id="A26974">
    <property type="entry name" value="PRSMAG"/>
</dbReference>
<dbReference type="RefSeq" id="WP_003964236.1">
    <property type="nucleotide sequence ID" value="NZ_UAVD01000006.1"/>
</dbReference>
<dbReference type="PDB" id="1SGC">
    <property type="method" value="X-ray"/>
    <property type="resolution" value="1.80 A"/>
    <property type="chains" value="A=117-297"/>
</dbReference>
<dbReference type="PDB" id="2SGA">
    <property type="method" value="X-ray"/>
    <property type="resolution" value="1.50 A"/>
    <property type="chains" value="A=117-297"/>
</dbReference>
<dbReference type="PDB" id="3SGA">
    <property type="method" value="X-ray"/>
    <property type="resolution" value="1.80 A"/>
    <property type="chains" value="E=117-297"/>
</dbReference>
<dbReference type="PDB" id="4SGA">
    <property type="method" value="X-ray"/>
    <property type="resolution" value="1.80 A"/>
    <property type="chains" value="E=117-297"/>
</dbReference>
<dbReference type="PDB" id="5SGA">
    <property type="method" value="X-ray"/>
    <property type="resolution" value="1.80 A"/>
    <property type="chains" value="E=117-297"/>
</dbReference>
<dbReference type="PDBsum" id="1SGC"/>
<dbReference type="PDBsum" id="2SGA"/>
<dbReference type="PDBsum" id="3SGA"/>
<dbReference type="PDBsum" id="4SGA"/>
<dbReference type="PDBsum" id="5SGA"/>
<dbReference type="SMR" id="P00776"/>
<dbReference type="Allergome" id="3640">
    <property type="allergen name" value="Str g Pronase"/>
</dbReference>
<dbReference type="MEROPS" id="S01.261"/>
<dbReference type="OMA" id="WYTEAST"/>
<dbReference type="OrthoDB" id="8781117at2"/>
<dbReference type="EvolutionaryTrace" id="P00776"/>
<dbReference type="GO" id="GO:0005576">
    <property type="term" value="C:extracellular region"/>
    <property type="evidence" value="ECO:0007669"/>
    <property type="project" value="InterPro"/>
</dbReference>
<dbReference type="GO" id="GO:0004252">
    <property type="term" value="F:serine-type endopeptidase activity"/>
    <property type="evidence" value="ECO:0007669"/>
    <property type="project" value="InterPro"/>
</dbReference>
<dbReference type="GO" id="GO:0006508">
    <property type="term" value="P:proteolysis"/>
    <property type="evidence" value="ECO:0007669"/>
    <property type="project" value="UniProtKB-KW"/>
</dbReference>
<dbReference type="CDD" id="cd21112">
    <property type="entry name" value="alphaLP-like"/>
    <property type="match status" value="1"/>
</dbReference>
<dbReference type="Gene3D" id="2.40.10.10">
    <property type="entry name" value="Trypsin-like serine proteases"/>
    <property type="match status" value="2"/>
</dbReference>
<dbReference type="InterPro" id="IPR004236">
    <property type="entry name" value="Pept_S1_alpha_lytic"/>
</dbReference>
<dbReference type="InterPro" id="IPR001316">
    <property type="entry name" value="Pept_S1A_streptogrisin"/>
</dbReference>
<dbReference type="InterPro" id="IPR009003">
    <property type="entry name" value="Peptidase_S1_PA"/>
</dbReference>
<dbReference type="InterPro" id="IPR043504">
    <property type="entry name" value="Peptidase_S1_PA_chymotrypsin"/>
</dbReference>
<dbReference type="InterPro" id="IPR001254">
    <property type="entry name" value="Trypsin_dom"/>
</dbReference>
<dbReference type="Pfam" id="PF02983">
    <property type="entry name" value="Pro_Al_protease"/>
    <property type="match status" value="1"/>
</dbReference>
<dbReference type="Pfam" id="PF00089">
    <property type="entry name" value="Trypsin"/>
    <property type="match status" value="1"/>
</dbReference>
<dbReference type="PIRSF" id="PIRSF001134">
    <property type="entry name" value="Streptogrisin"/>
    <property type="match status" value="1"/>
</dbReference>
<dbReference type="PRINTS" id="PR00861">
    <property type="entry name" value="ALYTICPTASE"/>
</dbReference>
<dbReference type="SUPFAM" id="SSF50494">
    <property type="entry name" value="Trypsin-like serine proteases"/>
    <property type="match status" value="1"/>
</dbReference>
<dbReference type="PROSITE" id="PS00134">
    <property type="entry name" value="TRYPSIN_HIS"/>
    <property type="match status" value="1"/>
</dbReference>
<dbReference type="PROSITE" id="PS00135">
    <property type="entry name" value="TRYPSIN_SER"/>
    <property type="match status" value="1"/>
</dbReference>
<keyword id="KW-0002">3D-structure</keyword>
<keyword id="KW-0903">Direct protein sequencing</keyword>
<keyword id="KW-1015">Disulfide bond</keyword>
<keyword id="KW-0378">Hydrolase</keyword>
<keyword id="KW-0645">Protease</keyword>
<keyword id="KW-0720">Serine protease</keyword>
<keyword id="KW-0732">Signal</keyword>
<keyword id="KW-0865">Zymogen</keyword>
<evidence type="ECO:0000250" key="1"/>
<evidence type="ECO:0000269" key="2">
    <source>
    </source>
</evidence>
<evidence type="ECO:0000269" key="3">
    <source>
    </source>
</evidence>
<evidence type="ECO:0000305" key="4"/>
<evidence type="ECO:0007829" key="5">
    <source>
        <dbReference type="PDB" id="2SGA"/>
    </source>
</evidence>
<proteinExistence type="evidence at protein level"/>
<protein>
    <recommendedName>
        <fullName>Streptogrisin-A</fullName>
        <ecNumber>3.4.21.80</ecNumber>
    </recommendedName>
    <alternativeName>
        <fullName>Pronase enzyme A</fullName>
    </alternativeName>
    <alternativeName>
        <fullName>SGPA</fullName>
    </alternativeName>
    <alternativeName>
        <fullName>Serine protease A</fullName>
    </alternativeName>
</protein>
<comment type="function">
    <text>Has a primary specificity for large aliphatic or aromatic amino acids.</text>
</comment>
<comment type="catalytic activity">
    <reaction>
        <text>Hydrolysis of proteins with specificity similar to chymotrypsin.</text>
        <dbReference type="EC" id="3.4.21.80"/>
    </reaction>
</comment>
<comment type="subunit">
    <text>Monomer.</text>
</comment>
<comment type="similarity">
    <text evidence="4">Belongs to the peptidase S1 family.</text>
</comment>
<name>PRTA_STRGR</name>
<accession>P00776</accession>
<reference key="1">
    <citation type="journal article" date="1987" name="J. Bacteriol.">
        <title>Characterization and structure of genes for proteases A and B from Streptomyces griseus.</title>
        <authorList>
            <person name="Henderson G."/>
            <person name="Krygsman P."/>
            <person name="Liu C.J."/>
            <person name="Davey C.C."/>
            <person name="Malek L.T."/>
        </authorList>
    </citation>
    <scope>NUCLEOTIDE SEQUENCE [GENOMIC DNA]</scope>
</reference>
<reference key="2">
    <citation type="journal article" date="1974" name="FEBS Lett.">
        <title>The amino acid sequence and predicted structure of Streptomyces griseus protease A.</title>
        <authorList>
            <person name="Johnson P."/>
            <person name="Smillie L.B."/>
        </authorList>
    </citation>
    <scope>PROTEIN SEQUENCE OF 116-297</scope>
</reference>
<reference key="3">
    <citation type="submission" date="1996-07" db="UniProtKB">
        <authorList>
            <person name="Apostol I."/>
            <person name="Smillie L.B."/>
            <person name="Laskowski M. Jr."/>
        </authorList>
    </citation>
    <scope>SEQUENCE REVISION TO 249</scope>
</reference>
<reference key="4">
    <citation type="journal article" date="1979" name="J. Mol. Biol.">
        <title>Protein structure refinement: Streptomyces griseus serine protease A at 1.8-A resolution.</title>
        <authorList>
            <person name="Sielecki A.R."/>
            <person name="Hendrickson W.A."/>
            <person name="Broughton C.G."/>
            <person name="Delbaere L.T.J."/>
            <person name="Brayer G.D."/>
            <person name="James M.N.G."/>
        </authorList>
    </citation>
    <scope>X-RAY CRYSTALLOGRAPHY (1.8 ANGSTROMS)</scope>
</reference>
<reference key="5">
    <citation type="journal article" date="1978" name="J. Mol. Biol.">
        <title>Molecular structure of crystalline Streptomyces griseus protease A at 2.8-A resolution. II. Molecular conformation, comparison with alpha-chymotrypsin and active-site geometry.</title>
        <authorList>
            <person name="Brayer G.D."/>
            <person name="Delbaere L.T.J."/>
            <person name="James M.N.G."/>
        </authorList>
    </citation>
    <scope>X-RAY CRYSTALLOGRAPHY (2.8 ANGSTROMS)</scope>
</reference>
<gene>
    <name type="primary">sprA</name>
</gene>
<sequence length="297" mass="29663">MTFKRFSPLSSTSRYARLLAVASGLVAAAALATPSAVAAPEAESKATVSQLADASSAILAADVAGTAWYTEASTGKIVLTADSTVSKAELAKVSNALAGSKAKLTVKRAEGKFTPLIAGGEAITTGGSRCSLGFNVSVNGVAHALTAGHCTNISASWSIGTRTGTSFPNNDYGIIRHSNPAAADGRVYLYNGSYQDITTAGNAFVGQAVQRSGSTTGLRSGSVTGLNATVNYGSSGIVYGMIQTNVCAEPGDSGGSLFAGSTALGLTSGGSGNCRTGGTTFYQPVTEALSAYGATVL</sequence>
<organism>
    <name type="scientific">Streptomyces griseus</name>
    <dbReference type="NCBI Taxonomy" id="1911"/>
    <lineage>
        <taxon>Bacteria</taxon>
        <taxon>Bacillati</taxon>
        <taxon>Actinomycetota</taxon>
        <taxon>Actinomycetes</taxon>
        <taxon>Kitasatosporales</taxon>
        <taxon>Streptomycetaceae</taxon>
        <taxon>Streptomyces</taxon>
    </lineage>
</organism>
<feature type="signal peptide">
    <location>
        <begin position="1"/>
        <end position="38"/>
    </location>
</feature>
<feature type="propeptide" id="PRO_0000026909" evidence="3">
    <location>
        <begin position="39"/>
        <end position="115"/>
    </location>
</feature>
<feature type="chain" id="PRO_0000026910" description="Streptogrisin-A">
    <location>
        <begin position="116"/>
        <end position="297"/>
    </location>
</feature>
<feature type="active site" description="Charge relay system" evidence="1">
    <location>
        <position position="149"/>
    </location>
</feature>
<feature type="active site" description="Charge relay system" evidence="1">
    <location>
        <position position="171"/>
    </location>
</feature>
<feature type="active site" description="Charge relay system" evidence="1">
    <location>
        <position position="253"/>
    </location>
</feature>
<feature type="disulfide bond" evidence="2">
    <location>
        <begin position="130"/>
        <end position="150"/>
    </location>
</feature>
<feature type="disulfide bond" evidence="2">
    <location>
        <begin position="247"/>
        <end position="274"/>
    </location>
</feature>
<feature type="sequence conflict" description="In Ref. 2; AA sequence." evidence="4" ref="2">
    <original>T</original>
    <variation>TS</variation>
    <location>
        <position position="151"/>
    </location>
</feature>
<feature type="sequence conflict" description="In Ref. 2; AA sequence." evidence="4" ref="2">
    <original>D</original>
    <variation>N</variation>
    <location>
        <position position="184"/>
    </location>
</feature>
<feature type="strand" evidence="5">
    <location>
        <begin position="122"/>
        <end position="125"/>
    </location>
</feature>
<feature type="strand" evidence="5">
    <location>
        <begin position="128"/>
        <end position="131"/>
    </location>
</feature>
<feature type="strand" evidence="5">
    <location>
        <begin position="134"/>
        <end position="138"/>
    </location>
</feature>
<feature type="strand" evidence="5">
    <location>
        <begin position="141"/>
        <end position="146"/>
    </location>
</feature>
<feature type="helix" evidence="5">
    <location>
        <begin position="148"/>
        <end position="151"/>
    </location>
</feature>
<feature type="strand" evidence="5">
    <location>
        <begin position="155"/>
        <end position="157"/>
    </location>
</feature>
<feature type="strand" evidence="5">
    <location>
        <begin position="160"/>
        <end position="166"/>
    </location>
</feature>
<feature type="strand" evidence="5">
    <location>
        <begin position="168"/>
        <end position="170"/>
    </location>
</feature>
<feature type="strand" evidence="5">
    <location>
        <begin position="172"/>
        <end position="178"/>
    </location>
</feature>
<feature type="helix" evidence="5">
    <location>
        <begin position="180"/>
        <end position="182"/>
    </location>
</feature>
<feature type="strand" evidence="5">
    <location>
        <begin position="186"/>
        <end position="188"/>
    </location>
</feature>
<feature type="strand" evidence="5">
    <location>
        <begin position="190"/>
        <end position="192"/>
    </location>
</feature>
<feature type="strand" evidence="5">
    <location>
        <begin position="194"/>
        <end position="196"/>
    </location>
</feature>
<feature type="strand" evidence="5">
    <location>
        <begin position="208"/>
        <end position="213"/>
    </location>
</feature>
<feature type="turn" evidence="5">
    <location>
        <begin position="214"/>
        <end position="216"/>
    </location>
</feature>
<feature type="strand" evidence="5">
    <location>
        <begin position="217"/>
        <end position="231"/>
    </location>
</feature>
<feature type="helix" evidence="5">
    <location>
        <begin position="233"/>
        <end position="235"/>
    </location>
</feature>
<feature type="strand" evidence="5">
    <location>
        <begin position="237"/>
        <end position="245"/>
    </location>
</feature>
<feature type="strand" evidence="5">
    <location>
        <begin position="256"/>
        <end position="259"/>
    </location>
</feature>
<feature type="strand" evidence="5">
    <location>
        <begin position="262"/>
        <end position="273"/>
    </location>
</feature>
<feature type="turn" evidence="5">
    <location>
        <begin position="274"/>
        <end position="276"/>
    </location>
</feature>
<feature type="strand" evidence="5">
    <location>
        <begin position="277"/>
        <end position="284"/>
    </location>
</feature>
<feature type="helix" evidence="5">
    <location>
        <begin position="285"/>
        <end position="292"/>
    </location>
</feature>
<feature type="strand" evidence="5">
    <location>
        <begin position="294"/>
        <end position="296"/>
    </location>
</feature>